<keyword id="KW-0028">Amino-acid biosynthesis</keyword>
<keyword id="KW-0055">Arginine biosynthesis</keyword>
<keyword id="KW-0496">Mitochondrion</keyword>
<keyword id="KW-1185">Reference proteome</keyword>
<keyword id="KW-0808">Transferase</keyword>
<keyword id="KW-0809">Transit peptide</keyword>
<keyword id="KW-0835">Urea cycle</keyword>
<reference key="1">
    <citation type="journal article" date="1998" name="J. Biochem.">
        <title>Chicken ornithine transcarbamylase gene, structure, regulation, and chromosomal assignment: repetitive sequence motif in intron 3 regulates this enzyme activity.</title>
        <authorList>
            <person name="Shimogiri T."/>
            <person name="Kono M."/>
            <person name="Mannen H."/>
            <person name="Mizutani M."/>
            <person name="Tsuji S."/>
        </authorList>
    </citation>
    <scope>NUCLEOTIDE SEQUENCE [GENOMIC DNA / MRNA]</scope>
    <source>
        <strain evidence="7">White leghorn</strain>
        <tissue evidence="7">Kidney</tissue>
    </source>
</reference>
<reference evidence="9" key="2">
    <citation type="journal article" date="1981" name="Biochem. Genet.">
        <title>Comparison of renal ornithine transcarbamylase activities within different chicken breeds.</title>
        <authorList>
            <person name="Tsuji S."/>
            <person name="Fukushima T."/>
        </authorList>
    </citation>
    <scope>FUNCTION</scope>
    <scope>CATALYTIC ACTIVITY</scope>
    <scope>PATHWAY</scope>
</reference>
<reference evidence="9" key="3">
    <citation type="journal article" date="1983" name="Biochem. Genet.">
        <title>Genetically controlled quantitative variation of ornithine transcarbamylase in the chick kidney.</title>
        <authorList>
            <person name="Tsuji S."/>
            <person name="Nakagawa K."/>
            <person name="Fukushima T."/>
        </authorList>
    </citation>
    <scope>ENZYME KINETICS</scope>
</reference>
<reference evidence="9" key="4">
    <citation type="journal article" date="1983" name="Biochem. Genet.">
        <title>Genetic control of ornithine transcarbamylase induction in chick kidney.</title>
        <authorList>
            <person name="Tsuji S."/>
            <person name="Nakagawa K."/>
            <person name="Fukushima T."/>
        </authorList>
    </citation>
    <scope>GENETIC REGULATION</scope>
</reference>
<reference evidence="9" key="5">
    <citation type="journal article" date="1983" name="J. Biochem.">
        <title>Chicken ornithine transcarbamylase: purification and some properties.</title>
        <authorList>
            <person name="Tsuji S."/>
        </authorList>
    </citation>
    <scope>ENZYME KINETICS</scope>
    <scope>SUBUNIT</scope>
</reference>
<reference evidence="9" key="6">
    <citation type="journal article" date="1983" name="Poult. Sci.">
        <title>Induction of ornithine transcarbamylase activity with egg yolk in chick kidney.</title>
        <authorList>
            <person name="Tsuji S."/>
            <person name="Nakagawa K."/>
            <person name="Nomura Y."/>
            <person name="Mukai F."/>
            <person name="Fukushima T."/>
        </authorList>
    </citation>
    <scope>INDUCTION</scope>
    <scope>DEVELOPMENTAL STAGE</scope>
</reference>
<reference evidence="9" key="7">
    <citation type="journal article" date="1987" name="Biochem. Genet.">
        <title>Chicken ornithine transcarbamylase: its unexpected expression.</title>
        <authorList>
            <person name="Tsuji S."/>
            <person name="Kanazawa S."/>
        </authorList>
    </citation>
    <scope>TISSUE SPECIFICITY</scope>
</reference>
<proteinExistence type="evidence at protein level"/>
<gene>
    <name evidence="2" type="primary">OTC</name>
</gene>
<protein>
    <recommendedName>
        <fullName evidence="10">Ornithine transcarbamylase, mitochondrial</fullName>
        <shortName evidence="8">OTCase</shortName>
        <ecNumber evidence="6">2.1.3.3</ecNumber>
    </recommendedName>
    <alternativeName>
        <fullName>Ornithine carbamoyltransferase, mitochondrial</fullName>
    </alternativeName>
</protein>
<evidence type="ECO:0000250" key="1"/>
<evidence type="ECO:0000250" key="2">
    <source>
        <dbReference type="UniProtKB" id="P00480"/>
    </source>
</evidence>
<evidence type="ECO:0000269" key="3">
    <source>
    </source>
</evidence>
<evidence type="ECO:0000269" key="4">
    <source>
    </source>
</evidence>
<evidence type="ECO:0000269" key="5">
    <source>
    </source>
</evidence>
<evidence type="ECO:0000269" key="6">
    <source>
    </source>
</evidence>
<evidence type="ECO:0000269" key="7">
    <source>
    </source>
</evidence>
<evidence type="ECO:0000303" key="8">
    <source>
    </source>
</evidence>
<evidence type="ECO:0000305" key="9"/>
<evidence type="ECO:0000305" key="10">
    <source>
    </source>
</evidence>
<sequence length="354" mass="40245">MLFNLKNLYRITKLTQNSKHLPRHFCRGPPNQMNVCLKGRDLLTLQNYTADELKYLLWVASDLKQRIKDKGEYLPLMQGKSLAMIFEKRSTRTRLSAETGFALLGGHSSFLTKQDIHLGTNESLTDTARVLSSMTNAILARVYKHNDLDLMTKEATIPVINGLSDLYHPLQILADYLTLQEHYGGLNGLTIAWIGDGNNVLHSIMTSAAKLGMHLRIATPKGFEPDLRITKVTEQYSKEYGTRLLLTTDPLEAANGANVLVTDTWISMGQEEEKRRRLKAFQGYQITMQTVQSAASNWTFLHCLPRKPEEVDDEVFYSPRSLVFQEAENRKWTIMAVMVSLLTDYSPQLQMPTF</sequence>
<dbReference type="EC" id="2.1.3.3" evidence="6"/>
<dbReference type="EMBL" id="AF065629">
    <property type="protein sequence ID" value="AAD12234.1"/>
    <property type="molecule type" value="mRNA"/>
</dbReference>
<dbReference type="EMBL" id="AF065638">
    <property type="protein sequence ID" value="AAD33083.1"/>
    <property type="molecule type" value="Genomic_DNA"/>
</dbReference>
<dbReference type="EMBL" id="AF065630">
    <property type="protein sequence ID" value="AAD33083.1"/>
    <property type="status" value="JOINED"/>
    <property type="molecule type" value="Genomic_DNA"/>
</dbReference>
<dbReference type="EMBL" id="AF065631">
    <property type="protein sequence ID" value="AAD33083.1"/>
    <property type="status" value="JOINED"/>
    <property type="molecule type" value="Genomic_DNA"/>
</dbReference>
<dbReference type="EMBL" id="AF065632">
    <property type="protein sequence ID" value="AAD33083.1"/>
    <property type="status" value="JOINED"/>
    <property type="molecule type" value="Genomic_DNA"/>
</dbReference>
<dbReference type="EMBL" id="AF065634">
    <property type="protein sequence ID" value="AAD33083.1"/>
    <property type="status" value="JOINED"/>
    <property type="molecule type" value="Genomic_DNA"/>
</dbReference>
<dbReference type="EMBL" id="AF065635">
    <property type="protein sequence ID" value="AAD33083.1"/>
    <property type="status" value="JOINED"/>
    <property type="molecule type" value="Genomic_DNA"/>
</dbReference>
<dbReference type="EMBL" id="AF065636">
    <property type="protein sequence ID" value="AAD33083.1"/>
    <property type="status" value="JOINED"/>
    <property type="molecule type" value="Genomic_DNA"/>
</dbReference>
<dbReference type="EMBL" id="AF065637">
    <property type="protein sequence ID" value="AAD33083.1"/>
    <property type="status" value="JOINED"/>
    <property type="molecule type" value="Genomic_DNA"/>
</dbReference>
<dbReference type="PIR" id="JE0309">
    <property type="entry name" value="JE0309"/>
</dbReference>
<dbReference type="RefSeq" id="NP_990241.1">
    <property type="nucleotide sequence ID" value="NM_204910.1"/>
</dbReference>
<dbReference type="RefSeq" id="XP_046762658.1">
    <property type="nucleotide sequence ID" value="XM_046906702.1"/>
</dbReference>
<dbReference type="SMR" id="Q9YHY9"/>
<dbReference type="FunCoup" id="Q9YHY9">
    <property type="interactions" value="98"/>
</dbReference>
<dbReference type="STRING" id="9031.ENSGALP00000026160"/>
<dbReference type="PaxDb" id="9031-ENSGALP00000026160"/>
<dbReference type="GeneID" id="395735"/>
<dbReference type="KEGG" id="gga:395735"/>
<dbReference type="CTD" id="5009"/>
<dbReference type="VEuPathDB" id="HostDB:geneid_395735"/>
<dbReference type="eggNOG" id="KOG1504">
    <property type="taxonomic scope" value="Eukaryota"/>
</dbReference>
<dbReference type="InParanoid" id="Q9YHY9"/>
<dbReference type="OrthoDB" id="10252326at2759"/>
<dbReference type="PhylomeDB" id="Q9YHY9"/>
<dbReference type="Reactome" id="R-GGA-187630">
    <property type="pathway name" value="Arginine metabolism"/>
</dbReference>
<dbReference type="SABIO-RK" id="Q9YHY9"/>
<dbReference type="UniPathway" id="UPA00158">
    <property type="reaction ID" value="UER00271"/>
</dbReference>
<dbReference type="PRO" id="PR:Q9YHY9"/>
<dbReference type="Proteomes" id="UP000000539">
    <property type="component" value="Unassembled WGS sequence"/>
</dbReference>
<dbReference type="GO" id="GO:0005759">
    <property type="term" value="C:mitochondrial matrix"/>
    <property type="evidence" value="ECO:0000304"/>
    <property type="project" value="Reactome"/>
</dbReference>
<dbReference type="GO" id="GO:0005739">
    <property type="term" value="C:mitochondrion"/>
    <property type="evidence" value="ECO:0000318"/>
    <property type="project" value="GO_Central"/>
</dbReference>
<dbReference type="GO" id="GO:0016597">
    <property type="term" value="F:amino acid binding"/>
    <property type="evidence" value="ECO:0007669"/>
    <property type="project" value="InterPro"/>
</dbReference>
<dbReference type="GO" id="GO:0004585">
    <property type="term" value="F:ornithine carbamoyltransferase activity"/>
    <property type="evidence" value="ECO:0000314"/>
    <property type="project" value="UniProtKB"/>
</dbReference>
<dbReference type="GO" id="GO:0042450">
    <property type="term" value="P:arginine biosynthetic process via ornithine"/>
    <property type="evidence" value="ECO:0000318"/>
    <property type="project" value="GO_Central"/>
</dbReference>
<dbReference type="GO" id="GO:0019240">
    <property type="term" value="P:citrulline biosynthetic process"/>
    <property type="evidence" value="ECO:0000318"/>
    <property type="project" value="GO_Central"/>
</dbReference>
<dbReference type="GO" id="GO:0006526">
    <property type="term" value="P:L-arginine biosynthetic process"/>
    <property type="evidence" value="ECO:0007669"/>
    <property type="project" value="UniProtKB-KW"/>
</dbReference>
<dbReference type="GO" id="GO:0000050">
    <property type="term" value="P:urea cycle"/>
    <property type="evidence" value="ECO:0007669"/>
    <property type="project" value="UniProtKB-UniPathway"/>
</dbReference>
<dbReference type="FunFam" id="3.40.50.1370:FF:000009">
    <property type="entry name" value="Ornithine carbamoyltransferase, mitochondrial"/>
    <property type="match status" value="1"/>
</dbReference>
<dbReference type="FunFam" id="3.40.50.1370:FF:000010">
    <property type="entry name" value="Ornithine carbamoyltransferase, mitochondrial"/>
    <property type="match status" value="1"/>
</dbReference>
<dbReference type="Gene3D" id="3.40.50.1370">
    <property type="entry name" value="Aspartate/ornithine carbamoyltransferase"/>
    <property type="match status" value="2"/>
</dbReference>
<dbReference type="InterPro" id="IPR006132">
    <property type="entry name" value="Asp/Orn_carbamoyltranf_P-bd"/>
</dbReference>
<dbReference type="InterPro" id="IPR006130">
    <property type="entry name" value="Asp/Orn_carbamoylTrfase"/>
</dbReference>
<dbReference type="InterPro" id="IPR036901">
    <property type="entry name" value="Asp/Orn_carbamoylTrfase_sf"/>
</dbReference>
<dbReference type="InterPro" id="IPR006131">
    <property type="entry name" value="Asp_carbamoyltransf_Asp/Orn-bd"/>
</dbReference>
<dbReference type="InterPro" id="IPR002292">
    <property type="entry name" value="Orn/put_carbamltrans"/>
</dbReference>
<dbReference type="NCBIfam" id="TIGR00658">
    <property type="entry name" value="orni_carb_tr"/>
    <property type="match status" value="1"/>
</dbReference>
<dbReference type="NCBIfam" id="NF001986">
    <property type="entry name" value="PRK00779.1"/>
    <property type="match status" value="1"/>
</dbReference>
<dbReference type="PANTHER" id="PTHR45753">
    <property type="entry name" value="ORNITHINE CARBAMOYLTRANSFERASE, MITOCHONDRIAL"/>
    <property type="match status" value="1"/>
</dbReference>
<dbReference type="PANTHER" id="PTHR45753:SF3">
    <property type="entry name" value="ORNITHINE TRANSCARBAMYLASE, MITOCHONDRIAL"/>
    <property type="match status" value="1"/>
</dbReference>
<dbReference type="Pfam" id="PF00185">
    <property type="entry name" value="OTCace"/>
    <property type="match status" value="1"/>
</dbReference>
<dbReference type="Pfam" id="PF02729">
    <property type="entry name" value="OTCace_N"/>
    <property type="match status" value="1"/>
</dbReference>
<dbReference type="PRINTS" id="PR00100">
    <property type="entry name" value="AOTCASE"/>
</dbReference>
<dbReference type="PRINTS" id="PR00102">
    <property type="entry name" value="OTCASE"/>
</dbReference>
<dbReference type="SUPFAM" id="SSF53671">
    <property type="entry name" value="Aspartate/ornithine carbamoyltransferase"/>
    <property type="match status" value="1"/>
</dbReference>
<dbReference type="PROSITE" id="PS00097">
    <property type="entry name" value="CARBAMOYLTRANSFERASE"/>
    <property type="match status" value="1"/>
</dbReference>
<comment type="function">
    <text evidence="6 9">Catalyzes the second step of the urea cycle, the condensation of carbamoyl phosphate with L-ornithine to form L-citrulline (PubMed:7332529). The urea cycle ensures the detoxification of ammonia by converting it to urea for excretion (Probable).</text>
</comment>
<comment type="catalytic activity">
    <reaction evidence="6">
        <text>carbamoyl phosphate + L-ornithine = L-citrulline + phosphate + H(+)</text>
        <dbReference type="Rhea" id="RHEA:19513"/>
        <dbReference type="ChEBI" id="CHEBI:15378"/>
        <dbReference type="ChEBI" id="CHEBI:43474"/>
        <dbReference type="ChEBI" id="CHEBI:46911"/>
        <dbReference type="ChEBI" id="CHEBI:57743"/>
        <dbReference type="ChEBI" id="CHEBI:58228"/>
        <dbReference type="EC" id="2.1.3.3"/>
    </reaction>
    <physiologicalReaction direction="right-to-left" evidence="10">
        <dbReference type="Rhea" id="RHEA:19515"/>
    </physiologicalReaction>
</comment>
<comment type="activity regulation">
    <text evidence="4">Inhibition by ornithine increases at higher pH.</text>
</comment>
<comment type="biophysicochemical properties">
    <kinetics>
        <KM>0.11 mM for carbamoyl phosphate (at pH 7.5)</KM>
        <KM>1.21 mM for ornithine (at pH 7.5)</KM>
        <text>With an increase in pH, a decrease in KM values for ornithine and an increase in the extent of inhibition by ornithine are observed.</text>
    </kinetics>
    <phDependence>
        <text>Optimum pH is 7.5 in the presence of 5 mM ornithine. The curve shifts toward a more alkaline region with a decrease in ornithine concentration.</text>
    </phDependence>
</comment>
<comment type="pathway">
    <text evidence="10">Nitrogen metabolism; urea cycle; L-citrulline from L-ornithine and carbamoyl phosphate: step 1/1.</text>
</comment>
<comment type="subunit">
    <text evidence="4">Homotrimer.</text>
</comment>
<comment type="subcellular location">
    <subcellularLocation>
        <location evidence="2">Mitochondrion matrix</location>
    </subcellularLocation>
</comment>
<comment type="tissue specificity">
    <text evidence="3">Expressed in kidney, brain, heart, liver, pancreas, gizzard, small intestine and breast muscle. More abundant in mitochondrion-rich organs (heart, liver and brain) than in other organs. Activity is only detected in the kidney.</text>
</comment>
<comment type="developmental stage">
    <text evidence="5">Activity detectable in embryos by day 14. Increases until 7 days post-hatching, then decreases again.</text>
</comment>
<comment type="induction">
    <text evidence="5">By diet of egg yolk in animals which have a high level of OTC activity due to presence of OCB gene.</text>
</comment>
<comment type="PTM">
    <text evidence="3">Cleavage of the precursor form to the active form occurs only in the kidney.</text>
</comment>
<comment type="miscellaneous">
    <text>Ornithine transcarbamylase activity varies within and between different breeds of chicken.</text>
</comment>
<comment type="similarity">
    <text evidence="9">Belongs to the aspartate/ornithine carbamoyltransferase superfamily. OTCase family.</text>
</comment>
<organism>
    <name type="scientific">Gallus gallus</name>
    <name type="common">Chicken</name>
    <dbReference type="NCBI Taxonomy" id="9031"/>
    <lineage>
        <taxon>Eukaryota</taxon>
        <taxon>Metazoa</taxon>
        <taxon>Chordata</taxon>
        <taxon>Craniata</taxon>
        <taxon>Vertebrata</taxon>
        <taxon>Euteleostomi</taxon>
        <taxon>Archelosauria</taxon>
        <taxon>Archosauria</taxon>
        <taxon>Dinosauria</taxon>
        <taxon>Saurischia</taxon>
        <taxon>Theropoda</taxon>
        <taxon>Coelurosauria</taxon>
        <taxon>Aves</taxon>
        <taxon>Neognathae</taxon>
        <taxon>Galloanserae</taxon>
        <taxon>Galliformes</taxon>
        <taxon>Phasianidae</taxon>
        <taxon>Phasianinae</taxon>
        <taxon>Gallus</taxon>
    </lineage>
</organism>
<name>OTC_CHICK</name>
<feature type="transit peptide" description="Mitochondrion" evidence="2">
    <location>
        <begin position="1"/>
        <end position="32"/>
    </location>
</feature>
<feature type="chain" id="PRO_0000020337" description="Ornithine transcarbamylase, mitochondrial">
    <location>
        <begin position="33"/>
        <end position="354"/>
    </location>
</feature>
<feature type="active site" evidence="1">
    <location>
        <position position="303"/>
    </location>
</feature>
<feature type="binding site" evidence="1">
    <location>
        <begin position="90"/>
        <end position="94"/>
    </location>
    <ligand>
        <name>carbamoyl phosphate</name>
        <dbReference type="ChEBI" id="CHEBI:58228"/>
    </ligand>
</feature>
<feature type="binding site" evidence="1">
    <location>
        <position position="141"/>
    </location>
    <ligand>
        <name>carbamoyl phosphate</name>
        <dbReference type="ChEBI" id="CHEBI:58228"/>
    </ligand>
</feature>
<feature type="binding site" evidence="1">
    <location>
        <position position="141"/>
    </location>
    <ligand>
        <name>L-ornithine</name>
        <dbReference type="ChEBI" id="CHEBI:46911"/>
    </ligand>
</feature>
<feature type="binding site" evidence="1">
    <location>
        <position position="168"/>
    </location>
    <ligand>
        <name>carbamoyl phosphate</name>
        <dbReference type="ChEBI" id="CHEBI:58228"/>
    </ligand>
</feature>
<feature type="binding site" evidence="1">
    <location>
        <position position="199"/>
    </location>
    <ligand>
        <name>L-ornithine</name>
        <dbReference type="ChEBI" id="CHEBI:46911"/>
    </ligand>
</feature>
<feature type="binding site" evidence="1">
    <location>
        <begin position="263"/>
        <end position="267"/>
    </location>
    <ligand>
        <name>L-ornithine</name>
        <dbReference type="ChEBI" id="CHEBI:46911"/>
    </ligand>
</feature>
<feature type="binding site" evidence="1">
    <location>
        <begin position="302"/>
        <end position="305"/>
    </location>
    <ligand>
        <name>L-ornithine</name>
        <dbReference type="ChEBI" id="CHEBI:46911"/>
    </ligand>
</feature>
<feature type="binding site" evidence="1">
    <location>
        <position position="330"/>
    </location>
    <ligand>
        <name>carbamoyl phosphate</name>
        <dbReference type="ChEBI" id="CHEBI:58228"/>
    </ligand>
</feature>
<feature type="binding site" evidence="1">
    <location>
        <position position="330"/>
    </location>
    <ligand>
        <name>L-ornithine</name>
        <dbReference type="ChEBI" id="CHEBI:46911"/>
    </ligand>
</feature>
<accession>Q9YHY9</accession>